<accession>O23225</accession>
<accession>F4JQE6</accession>
<sequence length="718" mass="79919">MRIDYTERMPQSYKMHSSMCLELKRLVDRIMRIFPDIEDARPGCSSGIQTLCLLHNALDKTKQLLQYCSESSKLYMAVTGDAILARGSRAKKSLEQCLNDIRSIVPTILEIKISQIVQDLRSTQLTLEFSEEEAGKAIRELMQKSTSSSASPDEIKDFHYAALKLQLSTPEAIVTERRSLKIICEDHKQNSFTHHQSIDDSLHANAAEAEASEEHNGTLPEKFKCTLSRTVMYDPVIISSGNTFERMQIQKWFDEGNDSCPISKRKLDDFTLKPNVELKSQISEWCAKNGLDVQDPARKHVKASNSIDFSVSIASFGSSLYNIPDHSGISITDFNSSYSIDSSSYSKMSKGGYFTPMQRIDSASGAGDTDSSHSEIEIDPLCGLTNLPWDAQIKVVEDVRSRFEHSTRAFRSMSPSKFLEPLITYLKNALERNGTAGEIIKGGLDLLLAFLSGNRRAIESLEEEVFKMFSVFLESEVVAEEALNILEVLSNHPHGPSKITSSGSLSSLLKIVESQAEHLQEQAMITLKNLSSSMEICLEMVSLDFIQKLTSFLQQKVFCKHSIIILKNLCSTEKGRGCITETPDCLASIAELLESNVPEEQENAISILLQLCVQKIEYCCLVVREATDIYSSLILISNNGTEEVKVSASELLRALVEVDSDKEEEEEVSSRPEGRTTASPTSQVVTPVTHPEPVKITPSPKKSGLFGFNFSSLKKKKK</sequence>
<evidence type="ECO:0000250" key="1"/>
<evidence type="ECO:0000256" key="2">
    <source>
        <dbReference type="SAM" id="MobiDB-lite"/>
    </source>
</evidence>
<evidence type="ECO:0000305" key="3"/>
<name>PUB5_ARATH</name>
<proteinExistence type="inferred from homology"/>
<comment type="function">
    <text evidence="1">Functions as an E3 ubiquitin ligase.</text>
</comment>
<comment type="catalytic activity">
    <reaction>
        <text>S-ubiquitinyl-[E2 ubiquitin-conjugating enzyme]-L-cysteine + [acceptor protein]-L-lysine = [E2 ubiquitin-conjugating enzyme]-L-cysteine + N(6)-ubiquitinyl-[acceptor protein]-L-lysine.</text>
        <dbReference type="EC" id="2.3.2.27"/>
    </reaction>
</comment>
<comment type="pathway">
    <text>Protein modification; protein ubiquitination.</text>
</comment>
<comment type="sequence caution" evidence="3">
    <conflict type="erroneous gene model prediction">
        <sequence resource="EMBL-CDS" id="CAB16838"/>
    </conflict>
</comment>
<comment type="sequence caution" evidence="3">
    <conflict type="erroneous gene model prediction">
        <sequence resource="EMBL-CDS" id="CAB80321"/>
    </conflict>
</comment>
<organism>
    <name type="scientific">Arabidopsis thaliana</name>
    <name type="common">Mouse-ear cress</name>
    <dbReference type="NCBI Taxonomy" id="3702"/>
    <lineage>
        <taxon>Eukaryota</taxon>
        <taxon>Viridiplantae</taxon>
        <taxon>Streptophyta</taxon>
        <taxon>Embryophyta</taxon>
        <taxon>Tracheophyta</taxon>
        <taxon>Spermatophyta</taxon>
        <taxon>Magnoliopsida</taxon>
        <taxon>eudicotyledons</taxon>
        <taxon>Gunneridae</taxon>
        <taxon>Pentapetalae</taxon>
        <taxon>rosids</taxon>
        <taxon>malvids</taxon>
        <taxon>Brassicales</taxon>
        <taxon>Brassicaceae</taxon>
        <taxon>Camelineae</taxon>
        <taxon>Arabidopsis</taxon>
    </lineage>
</organism>
<keyword id="KW-1185">Reference proteome</keyword>
<keyword id="KW-0677">Repeat</keyword>
<keyword id="KW-0808">Transferase</keyword>
<keyword id="KW-0833">Ubl conjugation pathway</keyword>
<dbReference type="EC" id="2.3.2.27"/>
<dbReference type="EMBL" id="Z99708">
    <property type="protein sequence ID" value="CAB16838.1"/>
    <property type="status" value="ALT_SEQ"/>
    <property type="molecule type" value="Genomic_DNA"/>
</dbReference>
<dbReference type="EMBL" id="AL161589">
    <property type="protein sequence ID" value="CAB80321.1"/>
    <property type="status" value="ALT_SEQ"/>
    <property type="molecule type" value="Genomic_DNA"/>
</dbReference>
<dbReference type="EMBL" id="CP002687">
    <property type="protein sequence ID" value="AEE86671.1"/>
    <property type="molecule type" value="Genomic_DNA"/>
</dbReference>
<dbReference type="PIR" id="E85431">
    <property type="entry name" value="E85431"/>
</dbReference>
<dbReference type="RefSeq" id="NP_195373.6">
    <property type="nucleotide sequence ID" value="NM_119818.6"/>
</dbReference>
<dbReference type="SMR" id="O23225"/>
<dbReference type="FunCoup" id="O23225">
    <property type="interactions" value="1016"/>
</dbReference>
<dbReference type="STRING" id="3702.O23225"/>
<dbReference type="iPTMnet" id="O23225"/>
<dbReference type="PaxDb" id="3702-AT4G36550.1"/>
<dbReference type="ProteomicsDB" id="226355"/>
<dbReference type="EnsemblPlants" id="AT4G36550.1">
    <property type="protein sequence ID" value="AT4G36550.1"/>
    <property type="gene ID" value="AT4G36550"/>
</dbReference>
<dbReference type="GeneID" id="829807"/>
<dbReference type="Gramene" id="AT4G36550.1">
    <property type="protein sequence ID" value="AT4G36550.1"/>
    <property type="gene ID" value="AT4G36550"/>
</dbReference>
<dbReference type="KEGG" id="ath:AT4G36550"/>
<dbReference type="Araport" id="AT4G36550"/>
<dbReference type="TAIR" id="AT4G36550"/>
<dbReference type="eggNOG" id="KOG0167">
    <property type="taxonomic scope" value="Eukaryota"/>
</dbReference>
<dbReference type="HOGENOM" id="CLU_006348_4_1_1"/>
<dbReference type="InParanoid" id="O23225"/>
<dbReference type="OMA" id="LILKWCE"/>
<dbReference type="UniPathway" id="UPA00143"/>
<dbReference type="PRO" id="PR:O23225"/>
<dbReference type="Proteomes" id="UP000006548">
    <property type="component" value="Chromosome 4"/>
</dbReference>
<dbReference type="ExpressionAtlas" id="O23225">
    <property type="expression patterns" value="baseline and differential"/>
</dbReference>
<dbReference type="GO" id="GO:0004842">
    <property type="term" value="F:ubiquitin-protein transferase activity"/>
    <property type="evidence" value="ECO:0007669"/>
    <property type="project" value="InterPro"/>
</dbReference>
<dbReference type="GO" id="GO:0016567">
    <property type="term" value="P:protein ubiquitination"/>
    <property type="evidence" value="ECO:0007669"/>
    <property type="project" value="UniProtKB-UniPathway"/>
</dbReference>
<dbReference type="CDD" id="cd16664">
    <property type="entry name" value="RING-Ubox_PUB"/>
    <property type="match status" value="1"/>
</dbReference>
<dbReference type="FunFam" id="1.25.10.10:FF:001483">
    <property type="entry name" value="RING-type E3 ubiquitin transferase"/>
    <property type="match status" value="1"/>
</dbReference>
<dbReference type="Gene3D" id="1.25.10.10">
    <property type="entry name" value="Leucine-rich Repeat Variant"/>
    <property type="match status" value="1"/>
</dbReference>
<dbReference type="Gene3D" id="3.30.40.10">
    <property type="entry name" value="Zinc/RING finger domain, C3HC4 (zinc finger)"/>
    <property type="match status" value="1"/>
</dbReference>
<dbReference type="InterPro" id="IPR011989">
    <property type="entry name" value="ARM-like"/>
</dbReference>
<dbReference type="InterPro" id="IPR016024">
    <property type="entry name" value="ARM-type_fold"/>
</dbReference>
<dbReference type="InterPro" id="IPR045210">
    <property type="entry name" value="RING-Ubox_PUB"/>
</dbReference>
<dbReference type="InterPro" id="IPR003613">
    <property type="entry name" value="Ubox_domain"/>
</dbReference>
<dbReference type="InterPro" id="IPR013083">
    <property type="entry name" value="Znf_RING/FYVE/PHD"/>
</dbReference>
<dbReference type="PANTHER" id="PTHR23315">
    <property type="entry name" value="U BOX DOMAIN-CONTAINING"/>
    <property type="match status" value="1"/>
</dbReference>
<dbReference type="PANTHER" id="PTHR23315:SF240">
    <property type="entry name" value="U-BOX DOMAIN-CONTAINING PROTEIN 5"/>
    <property type="match status" value="1"/>
</dbReference>
<dbReference type="Pfam" id="PF04564">
    <property type="entry name" value="U-box"/>
    <property type="match status" value="1"/>
</dbReference>
<dbReference type="SMART" id="SM00504">
    <property type="entry name" value="Ubox"/>
    <property type="match status" value="1"/>
</dbReference>
<dbReference type="SUPFAM" id="SSF48371">
    <property type="entry name" value="ARM repeat"/>
    <property type="match status" value="1"/>
</dbReference>
<dbReference type="SUPFAM" id="SSF57850">
    <property type="entry name" value="RING/U-box"/>
    <property type="match status" value="1"/>
</dbReference>
<dbReference type="PROSITE" id="PS51698">
    <property type="entry name" value="U_BOX"/>
    <property type="match status" value="1"/>
</dbReference>
<reference key="1">
    <citation type="journal article" date="1998" name="Nature">
        <title>Analysis of 1.9 Mb of contiguous sequence from chromosome 4 of Arabidopsis thaliana.</title>
        <authorList>
            <person name="Bevan M."/>
            <person name="Bancroft I."/>
            <person name="Bent E."/>
            <person name="Love K."/>
            <person name="Goodman H.M."/>
            <person name="Dean C."/>
            <person name="Bergkamp R."/>
            <person name="Dirkse W."/>
            <person name="van Staveren M."/>
            <person name="Stiekema W."/>
            <person name="Drost L."/>
            <person name="Ridley P."/>
            <person name="Hudson S.-A."/>
            <person name="Patel K."/>
            <person name="Murphy G."/>
            <person name="Piffanelli P."/>
            <person name="Wedler H."/>
            <person name="Wedler E."/>
            <person name="Wambutt R."/>
            <person name="Weitzenegger T."/>
            <person name="Pohl T."/>
            <person name="Terryn N."/>
            <person name="Gielen J."/>
            <person name="Villarroel R."/>
            <person name="De Clercq R."/>
            <person name="van Montagu M."/>
            <person name="Lecharny A."/>
            <person name="Aubourg S."/>
            <person name="Gy I."/>
            <person name="Kreis M."/>
            <person name="Lao N."/>
            <person name="Kavanagh T."/>
            <person name="Hempel S."/>
            <person name="Kotter P."/>
            <person name="Entian K.-D."/>
            <person name="Rieger M."/>
            <person name="Schaefer M."/>
            <person name="Funk B."/>
            <person name="Mueller-Auer S."/>
            <person name="Silvey M."/>
            <person name="James R."/>
            <person name="Monfort A."/>
            <person name="Pons A."/>
            <person name="Puigdomenech P."/>
            <person name="Douka A."/>
            <person name="Voukelatou E."/>
            <person name="Milioni D."/>
            <person name="Hatzopoulos P."/>
            <person name="Piravandi E."/>
            <person name="Obermaier B."/>
            <person name="Hilbert H."/>
            <person name="Duesterhoeft A."/>
            <person name="Moores T."/>
            <person name="Jones J.D.G."/>
            <person name="Eneva T."/>
            <person name="Palme K."/>
            <person name="Benes V."/>
            <person name="Rechmann S."/>
            <person name="Ansorge W."/>
            <person name="Cooke R."/>
            <person name="Berger C."/>
            <person name="Delseny M."/>
            <person name="Voet M."/>
            <person name="Volckaert G."/>
            <person name="Mewes H.-W."/>
            <person name="Klosterman S."/>
            <person name="Schueller C."/>
            <person name="Chalwatzis N."/>
        </authorList>
    </citation>
    <scope>NUCLEOTIDE SEQUENCE [LARGE SCALE GENOMIC DNA]</scope>
    <source>
        <strain>cv. Columbia</strain>
    </source>
</reference>
<reference key="2">
    <citation type="journal article" date="1999" name="Nature">
        <title>Sequence and analysis of chromosome 4 of the plant Arabidopsis thaliana.</title>
        <authorList>
            <person name="Mayer K.F.X."/>
            <person name="Schueller C."/>
            <person name="Wambutt R."/>
            <person name="Murphy G."/>
            <person name="Volckaert G."/>
            <person name="Pohl T."/>
            <person name="Duesterhoeft A."/>
            <person name="Stiekema W."/>
            <person name="Entian K.-D."/>
            <person name="Terryn N."/>
            <person name="Harris B."/>
            <person name="Ansorge W."/>
            <person name="Brandt P."/>
            <person name="Grivell L.A."/>
            <person name="Rieger M."/>
            <person name="Weichselgartner M."/>
            <person name="de Simone V."/>
            <person name="Obermaier B."/>
            <person name="Mache R."/>
            <person name="Mueller M."/>
            <person name="Kreis M."/>
            <person name="Delseny M."/>
            <person name="Puigdomenech P."/>
            <person name="Watson M."/>
            <person name="Schmidtheini T."/>
            <person name="Reichert B."/>
            <person name="Portetelle D."/>
            <person name="Perez-Alonso M."/>
            <person name="Boutry M."/>
            <person name="Bancroft I."/>
            <person name="Vos P."/>
            <person name="Hoheisel J."/>
            <person name="Zimmermann W."/>
            <person name="Wedler H."/>
            <person name="Ridley P."/>
            <person name="Langham S.-A."/>
            <person name="McCullagh B."/>
            <person name="Bilham L."/>
            <person name="Robben J."/>
            <person name="van der Schueren J."/>
            <person name="Grymonprez B."/>
            <person name="Chuang Y.-J."/>
            <person name="Vandenbussche F."/>
            <person name="Braeken M."/>
            <person name="Weltjens I."/>
            <person name="Voet M."/>
            <person name="Bastiaens I."/>
            <person name="Aert R."/>
            <person name="Defoor E."/>
            <person name="Weitzenegger T."/>
            <person name="Bothe G."/>
            <person name="Ramsperger U."/>
            <person name="Hilbert H."/>
            <person name="Braun M."/>
            <person name="Holzer E."/>
            <person name="Brandt A."/>
            <person name="Peters S."/>
            <person name="van Staveren M."/>
            <person name="Dirkse W."/>
            <person name="Mooijman P."/>
            <person name="Klein Lankhorst R."/>
            <person name="Rose M."/>
            <person name="Hauf J."/>
            <person name="Koetter P."/>
            <person name="Berneiser S."/>
            <person name="Hempel S."/>
            <person name="Feldpausch M."/>
            <person name="Lamberth S."/>
            <person name="Van den Daele H."/>
            <person name="De Keyser A."/>
            <person name="Buysshaert C."/>
            <person name="Gielen J."/>
            <person name="Villarroel R."/>
            <person name="De Clercq R."/>
            <person name="van Montagu M."/>
            <person name="Rogers J."/>
            <person name="Cronin A."/>
            <person name="Quail M.A."/>
            <person name="Bray-Allen S."/>
            <person name="Clark L."/>
            <person name="Doggett J."/>
            <person name="Hall S."/>
            <person name="Kay M."/>
            <person name="Lennard N."/>
            <person name="McLay K."/>
            <person name="Mayes R."/>
            <person name="Pettett A."/>
            <person name="Rajandream M.A."/>
            <person name="Lyne M."/>
            <person name="Benes V."/>
            <person name="Rechmann S."/>
            <person name="Borkova D."/>
            <person name="Bloecker H."/>
            <person name="Scharfe M."/>
            <person name="Grimm M."/>
            <person name="Loehnert T.-H."/>
            <person name="Dose S."/>
            <person name="de Haan M."/>
            <person name="Maarse A.C."/>
            <person name="Schaefer M."/>
            <person name="Mueller-Auer S."/>
            <person name="Gabel C."/>
            <person name="Fuchs M."/>
            <person name="Fartmann B."/>
            <person name="Granderath K."/>
            <person name="Dauner D."/>
            <person name="Herzl A."/>
            <person name="Neumann S."/>
            <person name="Argiriou A."/>
            <person name="Vitale D."/>
            <person name="Liguori R."/>
            <person name="Piravandi E."/>
            <person name="Massenet O."/>
            <person name="Quigley F."/>
            <person name="Clabauld G."/>
            <person name="Muendlein A."/>
            <person name="Felber R."/>
            <person name="Schnabl S."/>
            <person name="Hiller R."/>
            <person name="Schmidt W."/>
            <person name="Lecharny A."/>
            <person name="Aubourg S."/>
            <person name="Chefdor F."/>
            <person name="Cooke R."/>
            <person name="Berger C."/>
            <person name="Monfort A."/>
            <person name="Casacuberta E."/>
            <person name="Gibbons T."/>
            <person name="Weber N."/>
            <person name="Vandenbol M."/>
            <person name="Bargues M."/>
            <person name="Terol J."/>
            <person name="Torres A."/>
            <person name="Perez-Perez A."/>
            <person name="Purnelle B."/>
            <person name="Bent E."/>
            <person name="Johnson S."/>
            <person name="Tacon D."/>
            <person name="Jesse T."/>
            <person name="Heijnen L."/>
            <person name="Schwarz S."/>
            <person name="Scholler P."/>
            <person name="Heber S."/>
            <person name="Francs P."/>
            <person name="Bielke C."/>
            <person name="Frishman D."/>
            <person name="Haase D."/>
            <person name="Lemcke K."/>
            <person name="Mewes H.-W."/>
            <person name="Stocker S."/>
            <person name="Zaccaria P."/>
            <person name="Bevan M."/>
            <person name="Wilson R.K."/>
            <person name="de la Bastide M."/>
            <person name="Habermann K."/>
            <person name="Parnell L."/>
            <person name="Dedhia N."/>
            <person name="Gnoj L."/>
            <person name="Schutz K."/>
            <person name="Huang E."/>
            <person name="Spiegel L."/>
            <person name="Sekhon M."/>
            <person name="Murray J."/>
            <person name="Sheet P."/>
            <person name="Cordes M."/>
            <person name="Abu-Threideh J."/>
            <person name="Stoneking T."/>
            <person name="Kalicki J."/>
            <person name="Graves T."/>
            <person name="Harmon G."/>
            <person name="Edwards J."/>
            <person name="Latreille P."/>
            <person name="Courtney L."/>
            <person name="Cloud J."/>
            <person name="Abbott A."/>
            <person name="Scott K."/>
            <person name="Johnson D."/>
            <person name="Minx P."/>
            <person name="Bentley D."/>
            <person name="Fulton B."/>
            <person name="Miller N."/>
            <person name="Greco T."/>
            <person name="Kemp K."/>
            <person name="Kramer J."/>
            <person name="Fulton L."/>
            <person name="Mardis E."/>
            <person name="Dante M."/>
            <person name="Pepin K."/>
            <person name="Hillier L.W."/>
            <person name="Nelson J."/>
            <person name="Spieth J."/>
            <person name="Ryan E."/>
            <person name="Andrews S."/>
            <person name="Geisel C."/>
            <person name="Layman D."/>
            <person name="Du H."/>
            <person name="Ali J."/>
            <person name="Berghoff A."/>
            <person name="Jones K."/>
            <person name="Drone K."/>
            <person name="Cotton M."/>
            <person name="Joshu C."/>
            <person name="Antonoiu B."/>
            <person name="Zidanic M."/>
            <person name="Strong C."/>
            <person name="Sun H."/>
            <person name="Lamar B."/>
            <person name="Yordan C."/>
            <person name="Ma P."/>
            <person name="Zhong J."/>
            <person name="Preston R."/>
            <person name="Vil D."/>
            <person name="Shekher M."/>
            <person name="Matero A."/>
            <person name="Shah R."/>
            <person name="Swaby I.K."/>
            <person name="O'Shaughnessy A."/>
            <person name="Rodriguez M."/>
            <person name="Hoffman J."/>
            <person name="Till S."/>
            <person name="Granat S."/>
            <person name="Shohdy N."/>
            <person name="Hasegawa A."/>
            <person name="Hameed A."/>
            <person name="Lodhi M."/>
            <person name="Johnson A."/>
            <person name="Chen E."/>
            <person name="Marra M.A."/>
            <person name="Martienssen R."/>
            <person name="McCombie W.R."/>
        </authorList>
    </citation>
    <scope>NUCLEOTIDE SEQUENCE [LARGE SCALE GENOMIC DNA]</scope>
    <source>
        <strain>cv. Columbia</strain>
    </source>
</reference>
<reference key="3">
    <citation type="journal article" date="2017" name="Plant J.">
        <title>Araport11: a complete reannotation of the Arabidopsis thaliana reference genome.</title>
        <authorList>
            <person name="Cheng C.Y."/>
            <person name="Krishnakumar V."/>
            <person name="Chan A.P."/>
            <person name="Thibaud-Nissen F."/>
            <person name="Schobel S."/>
            <person name="Town C.D."/>
        </authorList>
    </citation>
    <scope>GENOME REANNOTATION</scope>
    <source>
        <strain>cv. Columbia</strain>
    </source>
</reference>
<reference key="4">
    <citation type="journal article" date="2001" name="Trends Plant Sci.">
        <title>The U-box protein family in plants.</title>
        <authorList>
            <person name="Azevedo C."/>
            <person name="Santos-Rosa M.J."/>
            <person name="Shirasu K."/>
        </authorList>
    </citation>
    <scope>GENE FAMILY ORGANIZATION</scope>
    <scope>NOMENCLATURE</scope>
</reference>
<reference key="5">
    <citation type="journal article" date="2004" name="Plant Physiol.">
        <title>A large complement of the predicted Arabidopsis ARM repeat proteins are members of the U-box E3 ubiquitin ligase family.</title>
        <authorList>
            <person name="Mudgil Y."/>
            <person name="Shiu S.-H."/>
            <person name="Stone S.L."/>
            <person name="Salt J.N."/>
            <person name="Goring D.R."/>
        </authorList>
    </citation>
    <scope>GENE FAMILY ORGANIZATION</scope>
</reference>
<protein>
    <recommendedName>
        <fullName>U-box domain-containing protein 5</fullName>
        <ecNumber>2.3.2.27</ecNumber>
    </recommendedName>
    <alternativeName>
        <fullName>Plant U-box protein 5</fullName>
    </alternativeName>
    <alternativeName>
        <fullName evidence="3">RING-type E3 ubiquitin transferase PUB5</fullName>
    </alternativeName>
</protein>
<gene>
    <name type="primary">PUB5</name>
    <name type="ordered locus">At4g36550</name>
    <name type="ORF">AP22.63</name>
    <name type="ORF">C7A10.810</name>
</gene>
<feature type="chain" id="PRO_0000322150" description="U-box domain-containing protein 5">
    <location>
        <begin position="1"/>
        <end position="718"/>
    </location>
</feature>
<feature type="domain" description="U-box">
    <location>
        <begin position="218"/>
        <end position="292"/>
    </location>
</feature>
<feature type="repeat" description="ARM 1">
    <location>
        <begin position="493"/>
        <end position="532"/>
    </location>
</feature>
<feature type="repeat" description="ARM 2">
    <location>
        <begin position="534"/>
        <end position="571"/>
    </location>
</feature>
<feature type="repeat" description="ARM 3">
    <location>
        <begin position="573"/>
        <end position="613"/>
    </location>
</feature>
<feature type="region of interest" description="Disordered" evidence="2">
    <location>
        <begin position="662"/>
        <end position="704"/>
    </location>
</feature>
<feature type="compositionally biased region" description="Polar residues" evidence="2">
    <location>
        <begin position="676"/>
        <end position="686"/>
    </location>
</feature>